<dbReference type="EMBL" id="BX248583">
    <property type="protein sequence ID" value="CAD83519.1"/>
    <property type="molecule type" value="Genomic_DNA"/>
</dbReference>
<dbReference type="SMR" id="Q7VQX3"/>
<dbReference type="STRING" id="203907.Bfl460"/>
<dbReference type="KEGG" id="bfl:Bfl460"/>
<dbReference type="eggNOG" id="COG2926">
    <property type="taxonomic scope" value="Bacteria"/>
</dbReference>
<dbReference type="HOGENOM" id="CLU_153146_0_0_6"/>
<dbReference type="OrthoDB" id="90485at2"/>
<dbReference type="Proteomes" id="UP000002192">
    <property type="component" value="Chromosome"/>
</dbReference>
<dbReference type="GO" id="GO:0005829">
    <property type="term" value="C:cytosol"/>
    <property type="evidence" value="ECO:0007669"/>
    <property type="project" value="TreeGrafter"/>
</dbReference>
<dbReference type="HAMAP" id="MF_00683">
    <property type="entry name" value="Pole_loc_TmaR"/>
    <property type="match status" value="1"/>
</dbReference>
<dbReference type="InterPro" id="IPR007458">
    <property type="entry name" value="DUF496"/>
</dbReference>
<dbReference type="NCBIfam" id="NF003844">
    <property type="entry name" value="PRK05423.1"/>
    <property type="match status" value="1"/>
</dbReference>
<dbReference type="PANTHER" id="PTHR39591">
    <property type="entry name" value="UPF0265 PROTEIN YEEX"/>
    <property type="match status" value="1"/>
</dbReference>
<dbReference type="PANTHER" id="PTHR39591:SF1">
    <property type="entry name" value="UPF0265 PROTEIN YEEX"/>
    <property type="match status" value="1"/>
</dbReference>
<dbReference type="Pfam" id="PF04363">
    <property type="entry name" value="DUF496"/>
    <property type="match status" value="1"/>
</dbReference>
<dbReference type="PIRSF" id="PIRSF028773">
    <property type="entry name" value="UCP028773"/>
    <property type="match status" value="1"/>
</dbReference>
<organism>
    <name type="scientific">Blochmanniella floridana</name>
    <dbReference type="NCBI Taxonomy" id="203907"/>
    <lineage>
        <taxon>Bacteria</taxon>
        <taxon>Pseudomonadati</taxon>
        <taxon>Pseudomonadota</taxon>
        <taxon>Gammaproteobacteria</taxon>
        <taxon>Enterobacterales</taxon>
        <taxon>Enterobacteriaceae</taxon>
        <taxon>ant endosymbionts</taxon>
        <taxon>Candidatus Blochmanniella</taxon>
    </lineage>
</organism>
<sequence>MNNSDIDKSFYSVLEFVRIFRRRNKLQREISDNEKKIRDNQKRVLLLRNLIDYIKSENSIEGVQVIITNMCNDYEDRVDDYIIKNAELSKERRELSKKLKQFKQSDNN</sequence>
<keyword id="KW-0175">Coiled coil</keyword>
<keyword id="KW-0963">Cytoplasm</keyword>
<keyword id="KW-1185">Reference proteome</keyword>
<proteinExistence type="inferred from homology"/>
<reference key="1">
    <citation type="journal article" date="2003" name="Proc. Natl. Acad. Sci. U.S.A.">
        <title>The genome sequence of Blochmannia floridanus: comparative analysis of reduced genomes.</title>
        <authorList>
            <person name="Gil R."/>
            <person name="Silva F.J."/>
            <person name="Zientz E."/>
            <person name="Delmotte F."/>
            <person name="Gonzalez-Candelas F."/>
            <person name="Latorre A."/>
            <person name="Rausell C."/>
            <person name="Kamerbeek J."/>
            <person name="Gadau J."/>
            <person name="Hoelldobler B."/>
            <person name="van Ham R.C.H.J."/>
            <person name="Gross R."/>
            <person name="Moya A."/>
        </authorList>
    </citation>
    <scope>NUCLEOTIDE SEQUENCE [LARGE SCALE GENOMIC DNA]</scope>
</reference>
<comment type="function">
    <text evidence="1">Pole-localizer protein involved in the regulation of several cellular processes.</text>
</comment>
<comment type="subcellular location">
    <subcellularLocation>
        <location evidence="1">Cytoplasm</location>
    </subcellularLocation>
</comment>
<comment type="similarity">
    <text evidence="1">Belongs to the pole-localizer TmaR family.</text>
</comment>
<evidence type="ECO:0000255" key="1">
    <source>
        <dbReference type="HAMAP-Rule" id="MF_00683"/>
    </source>
</evidence>
<name>TMAR_BLOFL</name>
<gene>
    <name evidence="1" type="primary">tmaR</name>
    <name type="ordered locus">Bfl460</name>
</gene>
<feature type="chain" id="PRO_0000072757" description="Pole-localizer protein TmaR">
    <location>
        <begin position="1"/>
        <end position="108"/>
    </location>
</feature>
<feature type="coiled-coil region" evidence="1">
    <location>
        <begin position="71"/>
        <end position="105"/>
    </location>
</feature>
<accession>Q7VQX3</accession>
<protein>
    <recommendedName>
        <fullName evidence="1">Pole-localizer protein TmaR</fullName>
    </recommendedName>
</protein>